<reference key="1">
    <citation type="journal article" date="2007" name="Nat. Biotechnol.">
        <title>Comparative analysis of the complete genome sequence of the plant growth-promoting bacterium Bacillus amyloliquefaciens FZB42.</title>
        <authorList>
            <person name="Chen X.H."/>
            <person name="Koumoutsi A."/>
            <person name="Scholz R."/>
            <person name="Eisenreich A."/>
            <person name="Schneider K."/>
            <person name="Heinemeyer I."/>
            <person name="Morgenstern B."/>
            <person name="Voss B."/>
            <person name="Hess W.R."/>
            <person name="Reva O."/>
            <person name="Junge H."/>
            <person name="Voigt B."/>
            <person name="Jungblut P.R."/>
            <person name="Vater J."/>
            <person name="Suessmuth R."/>
            <person name="Liesegang H."/>
            <person name="Strittmatter A."/>
            <person name="Gottschalk G."/>
            <person name="Borriss R."/>
        </authorList>
    </citation>
    <scope>NUCLEOTIDE SEQUENCE [LARGE SCALE GENOMIC DNA]</scope>
    <source>
        <strain>DSM 23117 / BGSC 10A6 / LMG 26770 / FZB42</strain>
    </source>
</reference>
<proteinExistence type="inferred from homology"/>
<gene>
    <name evidence="1" type="primary">sspP</name>
    <name type="ordered locus">RBAM_017780</name>
</gene>
<dbReference type="EMBL" id="CP000560">
    <property type="protein sequence ID" value="ABS74141.1"/>
    <property type="molecule type" value="Genomic_DNA"/>
</dbReference>
<dbReference type="RefSeq" id="WP_003153984.1">
    <property type="nucleotide sequence ID" value="NC_009725.2"/>
</dbReference>
<dbReference type="GeneID" id="93080910"/>
<dbReference type="KEGG" id="bay:RBAM_017780"/>
<dbReference type="HOGENOM" id="CLU_210130_1_0_9"/>
<dbReference type="Proteomes" id="UP000001120">
    <property type="component" value="Chromosome"/>
</dbReference>
<dbReference type="GO" id="GO:0030436">
    <property type="term" value="P:asexual sporulation"/>
    <property type="evidence" value="ECO:0007669"/>
    <property type="project" value="UniProtKB-UniRule"/>
</dbReference>
<dbReference type="GO" id="GO:0030435">
    <property type="term" value="P:sporulation resulting in formation of a cellular spore"/>
    <property type="evidence" value="ECO:0007669"/>
    <property type="project" value="UniProtKB-KW"/>
</dbReference>
<dbReference type="HAMAP" id="MF_00666">
    <property type="entry name" value="SspP"/>
    <property type="match status" value="1"/>
</dbReference>
<dbReference type="InterPro" id="IPR012614">
    <property type="entry name" value="SASP_SspP"/>
</dbReference>
<dbReference type="NCBIfam" id="NF006905">
    <property type="entry name" value="PRK09399.1"/>
    <property type="match status" value="1"/>
</dbReference>
<dbReference type="Pfam" id="PF08179">
    <property type="entry name" value="SspP"/>
    <property type="match status" value="1"/>
</dbReference>
<name>SSPP_BACVZ</name>
<sequence>MTNKNTSKDMHKNAPKGHNPGQPEPLSGSKKVKNRNHTRQKHNTSHDM</sequence>
<comment type="subcellular location">
    <subcellularLocation>
        <location evidence="1">Spore core</location>
    </subcellularLocation>
</comment>
<comment type="induction">
    <text evidence="1">Expressed only in the forespore compartment of sporulating cells.</text>
</comment>
<comment type="similarity">
    <text evidence="1">Belongs to the SspP family.</text>
</comment>
<organism>
    <name type="scientific">Bacillus velezensis (strain DSM 23117 / BGSC 10A6 / LMG 26770 / FZB42)</name>
    <name type="common">Bacillus amyloliquefaciens subsp. plantarum</name>
    <dbReference type="NCBI Taxonomy" id="326423"/>
    <lineage>
        <taxon>Bacteria</taxon>
        <taxon>Bacillati</taxon>
        <taxon>Bacillota</taxon>
        <taxon>Bacilli</taxon>
        <taxon>Bacillales</taxon>
        <taxon>Bacillaceae</taxon>
        <taxon>Bacillus</taxon>
        <taxon>Bacillus amyloliquefaciens group</taxon>
    </lineage>
</organism>
<evidence type="ECO:0000255" key="1">
    <source>
        <dbReference type="HAMAP-Rule" id="MF_00666"/>
    </source>
</evidence>
<evidence type="ECO:0000256" key="2">
    <source>
        <dbReference type="SAM" id="MobiDB-lite"/>
    </source>
</evidence>
<keyword id="KW-0749">Sporulation</keyword>
<feature type="chain" id="PRO_1000044693" description="Small, acid-soluble spore protein P">
    <location>
        <begin position="1"/>
        <end position="48"/>
    </location>
</feature>
<feature type="region of interest" description="Disordered" evidence="2">
    <location>
        <begin position="1"/>
        <end position="48"/>
    </location>
</feature>
<feature type="compositionally biased region" description="Basic and acidic residues" evidence="2">
    <location>
        <begin position="1"/>
        <end position="12"/>
    </location>
</feature>
<feature type="compositionally biased region" description="Basic residues" evidence="2">
    <location>
        <begin position="30"/>
        <end position="48"/>
    </location>
</feature>
<accession>A7Z565</accession>
<protein>
    <recommendedName>
        <fullName evidence="1">Small, acid-soluble spore protein P</fullName>
        <shortName evidence="1">SASP P</shortName>
    </recommendedName>
</protein>